<evidence type="ECO:0000255" key="1">
    <source>
        <dbReference type="HAMAP-Rule" id="MF_00315"/>
    </source>
</evidence>
<evidence type="ECO:0007829" key="2">
    <source>
        <dbReference type="PDB" id="8A9C"/>
    </source>
</evidence>
<evidence type="ECO:0007829" key="3">
    <source>
        <dbReference type="PDB" id="8BZX"/>
    </source>
</evidence>
<accession>A6T5F3</accession>
<protein>
    <recommendedName>
        <fullName evidence="1">1-deoxy-D-xylulose-5-phosphate synthase</fullName>
        <ecNumber evidence="1">2.2.1.7</ecNumber>
    </recommendedName>
    <alternativeName>
        <fullName evidence="1">1-deoxyxylulose-5-phosphate synthase</fullName>
        <shortName evidence="1">DXP synthase</shortName>
        <shortName evidence="1">DXPS</shortName>
    </alternativeName>
</protein>
<keyword id="KW-0002">3D-structure</keyword>
<keyword id="KW-0414">Isoprene biosynthesis</keyword>
<keyword id="KW-0460">Magnesium</keyword>
<keyword id="KW-0479">Metal-binding</keyword>
<keyword id="KW-0784">Thiamine biosynthesis</keyword>
<keyword id="KW-0786">Thiamine pyrophosphate</keyword>
<keyword id="KW-0808">Transferase</keyword>
<gene>
    <name evidence="1" type="primary">dxs</name>
    <name type="ordered locus">KPN78578_03630</name>
    <name type="ORF">KPN_00372</name>
</gene>
<dbReference type="EC" id="2.2.1.7" evidence="1"/>
<dbReference type="EMBL" id="CP000647">
    <property type="protein sequence ID" value="ABR75824.1"/>
    <property type="molecule type" value="Genomic_DNA"/>
</dbReference>
<dbReference type="RefSeq" id="WP_012068354.1">
    <property type="nucleotide sequence ID" value="NC_009648.1"/>
</dbReference>
<dbReference type="PDB" id="8A8Y">
    <property type="method" value="X-ray"/>
    <property type="resolution" value="2.10 A"/>
    <property type="chains" value="A/B=1-197, A/B=239-620"/>
</dbReference>
<dbReference type="PDB" id="8A9C">
    <property type="method" value="X-ray"/>
    <property type="resolution" value="1.80 A"/>
    <property type="chains" value="A/B=1-197, A/B=239-620"/>
</dbReference>
<dbReference type="PDB" id="8BZX">
    <property type="method" value="X-ray"/>
    <property type="resolution" value="2.05 A"/>
    <property type="chains" value="A/B=1-197, A/B=239-620"/>
</dbReference>
<dbReference type="PDBsum" id="8A8Y"/>
<dbReference type="PDBsum" id="8A9C"/>
<dbReference type="PDBsum" id="8BZX"/>
<dbReference type="SMR" id="A6T5F3"/>
<dbReference type="STRING" id="272620.KPN_00372"/>
<dbReference type="PaxDb" id="272620-KPN_00372"/>
<dbReference type="EnsemblBacteria" id="ABR75824">
    <property type="protein sequence ID" value="ABR75824"/>
    <property type="gene ID" value="KPN_00372"/>
</dbReference>
<dbReference type="KEGG" id="kpn:KPN_00372"/>
<dbReference type="HOGENOM" id="CLU_009227_1_4_6"/>
<dbReference type="UniPathway" id="UPA00064">
    <property type="reaction ID" value="UER00091"/>
</dbReference>
<dbReference type="Proteomes" id="UP000000265">
    <property type="component" value="Chromosome"/>
</dbReference>
<dbReference type="GO" id="GO:0005829">
    <property type="term" value="C:cytosol"/>
    <property type="evidence" value="ECO:0007669"/>
    <property type="project" value="TreeGrafter"/>
</dbReference>
<dbReference type="GO" id="GO:0008661">
    <property type="term" value="F:1-deoxy-D-xylulose-5-phosphate synthase activity"/>
    <property type="evidence" value="ECO:0007669"/>
    <property type="project" value="UniProtKB-UniRule"/>
</dbReference>
<dbReference type="GO" id="GO:0000287">
    <property type="term" value="F:magnesium ion binding"/>
    <property type="evidence" value="ECO:0007669"/>
    <property type="project" value="UniProtKB-UniRule"/>
</dbReference>
<dbReference type="GO" id="GO:0030976">
    <property type="term" value="F:thiamine pyrophosphate binding"/>
    <property type="evidence" value="ECO:0007669"/>
    <property type="project" value="UniProtKB-UniRule"/>
</dbReference>
<dbReference type="GO" id="GO:0052865">
    <property type="term" value="P:1-deoxy-D-xylulose 5-phosphate biosynthetic process"/>
    <property type="evidence" value="ECO:0007669"/>
    <property type="project" value="UniProtKB-UniPathway"/>
</dbReference>
<dbReference type="GO" id="GO:0019288">
    <property type="term" value="P:isopentenyl diphosphate biosynthetic process, methylerythritol 4-phosphate pathway"/>
    <property type="evidence" value="ECO:0007669"/>
    <property type="project" value="TreeGrafter"/>
</dbReference>
<dbReference type="GO" id="GO:0016114">
    <property type="term" value="P:terpenoid biosynthetic process"/>
    <property type="evidence" value="ECO:0007669"/>
    <property type="project" value="UniProtKB-UniRule"/>
</dbReference>
<dbReference type="GO" id="GO:0009228">
    <property type="term" value="P:thiamine biosynthetic process"/>
    <property type="evidence" value="ECO:0007669"/>
    <property type="project" value="UniProtKB-UniRule"/>
</dbReference>
<dbReference type="CDD" id="cd02007">
    <property type="entry name" value="TPP_DXS"/>
    <property type="match status" value="1"/>
</dbReference>
<dbReference type="CDD" id="cd07033">
    <property type="entry name" value="TPP_PYR_DXS_TK_like"/>
    <property type="match status" value="1"/>
</dbReference>
<dbReference type="FunFam" id="3.40.50.920:FF:000002">
    <property type="entry name" value="1-deoxy-D-xylulose-5-phosphate synthase"/>
    <property type="match status" value="1"/>
</dbReference>
<dbReference type="FunFam" id="3.40.50.970:FF:000005">
    <property type="entry name" value="1-deoxy-D-xylulose-5-phosphate synthase"/>
    <property type="match status" value="1"/>
</dbReference>
<dbReference type="Gene3D" id="3.40.50.920">
    <property type="match status" value="1"/>
</dbReference>
<dbReference type="Gene3D" id="3.40.50.970">
    <property type="match status" value="2"/>
</dbReference>
<dbReference type="HAMAP" id="MF_00315">
    <property type="entry name" value="DXP_synth"/>
    <property type="match status" value="1"/>
</dbReference>
<dbReference type="InterPro" id="IPR005477">
    <property type="entry name" value="Dxylulose-5-P_synthase"/>
</dbReference>
<dbReference type="InterPro" id="IPR029061">
    <property type="entry name" value="THDP-binding"/>
</dbReference>
<dbReference type="InterPro" id="IPR009014">
    <property type="entry name" value="Transketo_C/PFOR_II"/>
</dbReference>
<dbReference type="InterPro" id="IPR005475">
    <property type="entry name" value="Transketolase-like_Pyr-bd"/>
</dbReference>
<dbReference type="InterPro" id="IPR020826">
    <property type="entry name" value="Transketolase_BS"/>
</dbReference>
<dbReference type="InterPro" id="IPR033248">
    <property type="entry name" value="Transketolase_C"/>
</dbReference>
<dbReference type="InterPro" id="IPR049557">
    <property type="entry name" value="Transketolase_CS"/>
</dbReference>
<dbReference type="NCBIfam" id="TIGR00204">
    <property type="entry name" value="dxs"/>
    <property type="match status" value="1"/>
</dbReference>
<dbReference type="NCBIfam" id="NF003933">
    <property type="entry name" value="PRK05444.2-2"/>
    <property type="match status" value="1"/>
</dbReference>
<dbReference type="PANTHER" id="PTHR43322">
    <property type="entry name" value="1-D-DEOXYXYLULOSE 5-PHOSPHATE SYNTHASE-RELATED"/>
    <property type="match status" value="1"/>
</dbReference>
<dbReference type="PANTHER" id="PTHR43322:SF5">
    <property type="entry name" value="1-DEOXY-D-XYLULOSE-5-PHOSPHATE SYNTHASE, CHLOROPLASTIC"/>
    <property type="match status" value="1"/>
</dbReference>
<dbReference type="Pfam" id="PF13292">
    <property type="entry name" value="DXP_synthase_N"/>
    <property type="match status" value="1"/>
</dbReference>
<dbReference type="Pfam" id="PF02779">
    <property type="entry name" value="Transket_pyr"/>
    <property type="match status" value="1"/>
</dbReference>
<dbReference type="Pfam" id="PF02780">
    <property type="entry name" value="Transketolase_C"/>
    <property type="match status" value="1"/>
</dbReference>
<dbReference type="SMART" id="SM00861">
    <property type="entry name" value="Transket_pyr"/>
    <property type="match status" value="1"/>
</dbReference>
<dbReference type="SUPFAM" id="SSF52518">
    <property type="entry name" value="Thiamin diphosphate-binding fold (THDP-binding)"/>
    <property type="match status" value="2"/>
</dbReference>
<dbReference type="SUPFAM" id="SSF52922">
    <property type="entry name" value="TK C-terminal domain-like"/>
    <property type="match status" value="1"/>
</dbReference>
<dbReference type="PROSITE" id="PS00801">
    <property type="entry name" value="TRANSKETOLASE_1"/>
    <property type="match status" value="1"/>
</dbReference>
<dbReference type="PROSITE" id="PS00802">
    <property type="entry name" value="TRANSKETOLASE_2"/>
    <property type="match status" value="1"/>
</dbReference>
<proteinExistence type="evidence at protein level"/>
<organism>
    <name type="scientific">Klebsiella pneumoniae subsp. pneumoniae (strain ATCC 700721 / MGH 78578)</name>
    <dbReference type="NCBI Taxonomy" id="272620"/>
    <lineage>
        <taxon>Bacteria</taxon>
        <taxon>Pseudomonadati</taxon>
        <taxon>Pseudomonadota</taxon>
        <taxon>Gammaproteobacteria</taxon>
        <taxon>Enterobacterales</taxon>
        <taxon>Enterobacteriaceae</taxon>
        <taxon>Klebsiella/Raoultella group</taxon>
        <taxon>Klebsiella</taxon>
        <taxon>Klebsiella pneumoniae complex</taxon>
    </lineage>
</organism>
<reference key="1">
    <citation type="submission" date="2006-09" db="EMBL/GenBank/DDBJ databases">
        <authorList>
            <consortium name="The Klebsiella pneumonia Genome Sequencing Project"/>
            <person name="McClelland M."/>
            <person name="Sanderson E.K."/>
            <person name="Spieth J."/>
            <person name="Clifton W.S."/>
            <person name="Latreille P."/>
            <person name="Sabo A."/>
            <person name="Pepin K."/>
            <person name="Bhonagiri V."/>
            <person name="Porwollik S."/>
            <person name="Ali J."/>
            <person name="Wilson R.K."/>
        </authorList>
    </citation>
    <scope>NUCLEOTIDE SEQUENCE [LARGE SCALE GENOMIC DNA]</scope>
    <source>
        <strain>ATCC 700721 / MGH 78578</strain>
    </source>
</reference>
<comment type="function">
    <text evidence="1">Catalyzes the acyloin condensation reaction between C atoms 2 and 3 of pyruvate and glyceraldehyde 3-phosphate to yield 1-deoxy-D-xylulose-5-phosphate (DXP).</text>
</comment>
<comment type="catalytic activity">
    <reaction evidence="1">
        <text>D-glyceraldehyde 3-phosphate + pyruvate + H(+) = 1-deoxy-D-xylulose 5-phosphate + CO2</text>
        <dbReference type="Rhea" id="RHEA:12605"/>
        <dbReference type="ChEBI" id="CHEBI:15361"/>
        <dbReference type="ChEBI" id="CHEBI:15378"/>
        <dbReference type="ChEBI" id="CHEBI:16526"/>
        <dbReference type="ChEBI" id="CHEBI:57792"/>
        <dbReference type="ChEBI" id="CHEBI:59776"/>
        <dbReference type="EC" id="2.2.1.7"/>
    </reaction>
</comment>
<comment type="cofactor">
    <cofactor evidence="1">
        <name>Mg(2+)</name>
        <dbReference type="ChEBI" id="CHEBI:18420"/>
    </cofactor>
    <text evidence="1">Binds 1 Mg(2+) ion per subunit.</text>
</comment>
<comment type="cofactor">
    <cofactor evidence="1">
        <name>thiamine diphosphate</name>
        <dbReference type="ChEBI" id="CHEBI:58937"/>
    </cofactor>
    <text evidence="1">Binds 1 thiamine pyrophosphate per subunit.</text>
</comment>
<comment type="pathway">
    <text evidence="1">Metabolic intermediate biosynthesis; 1-deoxy-D-xylulose 5-phosphate biosynthesis; 1-deoxy-D-xylulose 5-phosphate from D-glyceraldehyde 3-phosphate and pyruvate: step 1/1.</text>
</comment>
<comment type="subunit">
    <text evidence="1">Homodimer.</text>
</comment>
<comment type="similarity">
    <text evidence="1">Belongs to the transketolase family. DXPS subfamily.</text>
</comment>
<feature type="chain" id="PRO_1000019035" description="1-deoxy-D-xylulose-5-phosphate synthase">
    <location>
        <begin position="1"/>
        <end position="620"/>
    </location>
</feature>
<feature type="binding site" evidence="1">
    <location>
        <position position="80"/>
    </location>
    <ligand>
        <name>thiamine diphosphate</name>
        <dbReference type="ChEBI" id="CHEBI:58937"/>
    </ligand>
</feature>
<feature type="binding site" evidence="1">
    <location>
        <begin position="121"/>
        <end position="123"/>
    </location>
    <ligand>
        <name>thiamine diphosphate</name>
        <dbReference type="ChEBI" id="CHEBI:58937"/>
    </ligand>
</feature>
<feature type="binding site" evidence="1">
    <location>
        <position position="152"/>
    </location>
    <ligand>
        <name>Mg(2+)</name>
        <dbReference type="ChEBI" id="CHEBI:18420"/>
    </ligand>
</feature>
<feature type="binding site" evidence="1">
    <location>
        <begin position="153"/>
        <end position="154"/>
    </location>
    <ligand>
        <name>thiamine diphosphate</name>
        <dbReference type="ChEBI" id="CHEBI:58937"/>
    </ligand>
</feature>
<feature type="binding site" evidence="1">
    <location>
        <position position="181"/>
    </location>
    <ligand>
        <name>Mg(2+)</name>
        <dbReference type="ChEBI" id="CHEBI:18420"/>
    </ligand>
</feature>
<feature type="binding site" evidence="1">
    <location>
        <position position="181"/>
    </location>
    <ligand>
        <name>thiamine diphosphate</name>
        <dbReference type="ChEBI" id="CHEBI:58937"/>
    </ligand>
</feature>
<feature type="binding site" evidence="1">
    <location>
        <position position="288"/>
    </location>
    <ligand>
        <name>thiamine diphosphate</name>
        <dbReference type="ChEBI" id="CHEBI:58937"/>
    </ligand>
</feature>
<feature type="binding site" evidence="1">
    <location>
        <position position="370"/>
    </location>
    <ligand>
        <name>thiamine diphosphate</name>
        <dbReference type="ChEBI" id="CHEBI:58937"/>
    </ligand>
</feature>
<feature type="turn" evidence="2">
    <location>
        <begin position="5"/>
        <end position="7"/>
    </location>
</feature>
<feature type="helix" evidence="2">
    <location>
        <begin position="11"/>
        <end position="13"/>
    </location>
</feature>
<feature type="helix" evidence="2">
    <location>
        <begin position="17"/>
        <end position="20"/>
    </location>
</feature>
<feature type="helix" evidence="2">
    <location>
        <begin position="25"/>
        <end position="27"/>
    </location>
</feature>
<feature type="helix" evidence="2">
    <location>
        <begin position="28"/>
        <end position="42"/>
    </location>
</feature>
<feature type="helix" evidence="3">
    <location>
        <begin position="43"/>
        <end position="45"/>
    </location>
</feature>
<feature type="helix" evidence="2">
    <location>
        <begin position="51"/>
        <end position="55"/>
    </location>
</feature>
<feature type="helix" evidence="2">
    <location>
        <begin position="57"/>
        <end position="66"/>
    </location>
</feature>
<feature type="turn" evidence="2">
    <location>
        <begin position="69"/>
        <end position="71"/>
    </location>
</feature>
<feature type="strand" evidence="2">
    <location>
        <begin position="72"/>
        <end position="76"/>
    </location>
</feature>
<feature type="helix" evidence="2">
    <location>
        <begin position="80"/>
        <end position="82"/>
    </location>
</feature>
<feature type="helix" evidence="2">
    <location>
        <begin position="83"/>
        <end position="88"/>
    </location>
</feature>
<feature type="turn" evidence="2">
    <location>
        <begin position="89"/>
        <end position="91"/>
    </location>
</feature>
<feature type="helix" evidence="2">
    <location>
        <begin position="92"/>
        <end position="97"/>
    </location>
</feature>
<feature type="turn" evidence="2">
    <location>
        <begin position="110"/>
        <end position="112"/>
    </location>
</feature>
<feature type="strand" evidence="2">
    <location>
        <begin position="121"/>
        <end position="124"/>
    </location>
</feature>
<feature type="helix" evidence="2">
    <location>
        <begin position="126"/>
        <end position="140"/>
    </location>
</feature>
<feature type="strand" evidence="2">
    <location>
        <begin position="146"/>
        <end position="151"/>
    </location>
</feature>
<feature type="helix" evidence="2">
    <location>
        <begin position="154"/>
        <end position="156"/>
    </location>
</feature>
<feature type="helix" evidence="2">
    <location>
        <begin position="158"/>
        <end position="170"/>
    </location>
</feature>
<feature type="strand" evidence="2">
    <location>
        <begin position="175"/>
        <end position="179"/>
    </location>
</feature>
<feature type="strand" evidence="3">
    <location>
        <begin position="182"/>
        <end position="187"/>
    </location>
</feature>
<feature type="helix" evidence="2">
    <location>
        <begin position="241"/>
        <end position="245"/>
    </location>
</feature>
<feature type="strand" evidence="2">
    <location>
        <begin position="249"/>
        <end position="255"/>
    </location>
</feature>
<feature type="helix" evidence="2">
    <location>
        <begin position="259"/>
        <end position="270"/>
    </location>
</feature>
<feature type="strand" evidence="2">
    <location>
        <begin position="276"/>
        <end position="281"/>
    </location>
</feature>
<feature type="turn" evidence="3">
    <location>
        <begin position="284"/>
        <end position="287"/>
    </location>
</feature>
<feature type="turn" evidence="3">
    <location>
        <begin position="295"/>
        <end position="299"/>
    </location>
</feature>
<feature type="helix" evidence="2">
    <location>
        <begin position="321"/>
        <end position="335"/>
    </location>
</feature>
<feature type="strand" evidence="2">
    <location>
        <begin position="339"/>
        <end position="345"/>
    </location>
</feature>
<feature type="turn" evidence="2">
    <location>
        <begin position="347"/>
        <end position="351"/>
    </location>
</feature>
<feature type="helix" evidence="2">
    <location>
        <begin position="353"/>
        <end position="358"/>
    </location>
</feature>
<feature type="helix" evidence="2">
    <location>
        <begin position="360"/>
        <end position="362"/>
    </location>
</feature>
<feature type="strand" evidence="2">
    <location>
        <begin position="363"/>
        <end position="365"/>
    </location>
</feature>
<feature type="helix" evidence="2">
    <location>
        <begin position="370"/>
        <end position="382"/>
    </location>
</feature>
<feature type="strand" evidence="2">
    <location>
        <begin position="386"/>
        <end position="392"/>
    </location>
</feature>
<feature type="helix" evidence="2">
    <location>
        <begin position="393"/>
        <end position="396"/>
    </location>
</feature>
<feature type="helix" evidence="2">
    <location>
        <begin position="397"/>
        <end position="399"/>
    </location>
</feature>
<feature type="helix" evidence="2">
    <location>
        <begin position="400"/>
        <end position="406"/>
    </location>
</feature>
<feature type="turn" evidence="2">
    <location>
        <begin position="407"/>
        <end position="411"/>
    </location>
</feature>
<feature type="strand" evidence="2">
    <location>
        <begin position="415"/>
        <end position="420"/>
    </location>
</feature>
<feature type="helix" evidence="2">
    <location>
        <begin position="428"/>
        <end position="431"/>
    </location>
</feature>
<feature type="helix" evidence="2">
    <location>
        <begin position="436"/>
        <end position="441"/>
    </location>
</feature>
<feature type="strand" evidence="2">
    <location>
        <begin position="447"/>
        <end position="449"/>
    </location>
</feature>
<feature type="helix" evidence="2">
    <location>
        <begin position="454"/>
        <end position="466"/>
    </location>
</feature>
<feature type="strand" evidence="2">
    <location>
        <begin position="472"/>
        <end position="475"/>
    </location>
</feature>
<feature type="strand" evidence="2">
    <location>
        <begin position="478"/>
        <end position="480"/>
    </location>
</feature>
<feature type="strand" evidence="2">
    <location>
        <begin position="498"/>
        <end position="501"/>
    </location>
</feature>
<feature type="strand" evidence="2">
    <location>
        <begin position="504"/>
        <end position="512"/>
    </location>
</feature>
<feature type="helix" evidence="2">
    <location>
        <begin position="515"/>
        <end position="525"/>
    </location>
</feature>
<feature type="strand" evidence="2">
    <location>
        <begin position="528"/>
        <end position="531"/>
    </location>
</feature>
<feature type="strand" evidence="2">
    <location>
        <begin position="534"/>
        <end position="537"/>
    </location>
</feature>
<feature type="helix" evidence="2">
    <location>
        <begin position="540"/>
        <end position="549"/>
    </location>
</feature>
<feature type="strand" evidence="2">
    <location>
        <begin position="551"/>
        <end position="561"/>
    </location>
</feature>
<feature type="helix" evidence="2">
    <location>
        <begin position="565"/>
        <end position="575"/>
    </location>
</feature>
<feature type="strand" evidence="2">
    <location>
        <begin position="582"/>
        <end position="587"/>
    </location>
</feature>
<feature type="helix" evidence="2">
    <location>
        <begin position="597"/>
        <end position="603"/>
    </location>
</feature>
<feature type="helix" evidence="2">
    <location>
        <begin position="608"/>
        <end position="618"/>
    </location>
</feature>
<sequence length="620" mass="67360">MSFDIAKYPTLALVDSTQELRLLPKESLPKLCDELRRYLLDSVSRSSGHFASGLGTVELTVALHYVYNTPFDRLIWDVGHQAYPHKILTGRRDKIGTIRQKGGLHPFPWRGESEYDVLSVGHSSTSISAGIGVAIAAAKEDKQRRAVCVIGDGAITAGMAFEAMNHAGDIKPDLLVVLNDNEMSISENVGALNNHLAQLLSGKLYSTLREGGKKVFSGVPPIKELLKRTEEHIKGMVVPGTLFEELGFNYIGPVDGHDVLGLVSTLKNMRDLKGPQFLHIMTKKGRGYEPAEKDPITFHAVPKFDHTSGVLPKSSGGLPSYSKIFGDWLCETAAKDNKLMAITPAMREGSGMVEFSKKFPDRYFDVAIAEQHAVTFAAGLAIGDYKPVVAIYSTFLQRAYDQVIHDVAIQKLPVLFTIDRAGIVGADGQTHQGAFDLSFLRCIPDMVVMTPSDENECRQMLYTGYHYSDGPCAVRYPRGSGTGATLEPLASLPIGKGVVKRQGEKIAILNFGTLLPEAAAVADKLNATLVDMRFVKPLDTALILQLAGEHDALVTLEENAIMGGAGSGVNEVLMAHRRAVPVLNIGLPDYFIPQGTQEEIRADLGLDAAGIEAKIRDWLA</sequence>
<name>DXS_KLEP7</name>